<proteinExistence type="evidence at protein level"/>
<evidence type="ECO:0000250" key="1"/>
<evidence type="ECO:0000255" key="2">
    <source>
        <dbReference type="PROSITE-ProRule" id="PRU00159"/>
    </source>
</evidence>
<evidence type="ECO:0000255" key="3">
    <source>
        <dbReference type="PROSITE-ProRule" id="PRU10027"/>
    </source>
</evidence>
<evidence type="ECO:0000269" key="4">
    <source>
    </source>
</evidence>
<evidence type="ECO:0000269" key="5">
    <source>
    </source>
</evidence>
<evidence type="ECO:0000269" key="6">
    <source>
    </source>
</evidence>
<evidence type="ECO:0000269" key="7">
    <source ref="4"/>
</evidence>
<evidence type="ECO:0000303" key="8">
    <source>
    </source>
</evidence>
<evidence type="ECO:0000303" key="9">
    <source>
    </source>
</evidence>
<evidence type="ECO:0000303" key="10">
    <source ref="1"/>
</evidence>
<evidence type="ECO:0000303" key="11">
    <source ref="2"/>
</evidence>
<evidence type="ECO:0000303" key="12">
    <source ref="3"/>
</evidence>
<evidence type="ECO:0000305" key="13"/>
<sequence>MDQYCILGRIGEGAHGIVFKAKHVETGEIVALKKVALRRLEDGFPNQALREIKALQEMEDNQYVVQLKAVFPHGGGFVLAFEFMLSDLAEVVRHAQRPLAQAQVKSYLQMLLKGVAFCHANNIVHRDLKPANLLISASGQLKIADFGLARVFSPDGSRLYTHQVATRWYRAPELLYGARQYDQGVDLWSVGCIMGELLNGSPLFPGKNDIEQLCYVLRILGTPNPQVWPELTELPDYNKISFKEQVPMPLEEVLPDVSPQALDLLGQFLLYPPHQRIAASKALLHQYFFTAPLPAHPSELPIPQRLGGPAPKAHPGPPHIHDFHVDRPLEESLLNPELIRPFILEG</sequence>
<keyword id="KW-0025">Alternative splicing</keyword>
<keyword id="KW-0067">ATP-binding</keyword>
<keyword id="KW-0131">Cell cycle</keyword>
<keyword id="KW-0132">Cell division</keyword>
<keyword id="KW-0966">Cell projection</keyword>
<keyword id="KW-0969">Cilium</keyword>
<keyword id="KW-0963">Cytoplasm</keyword>
<keyword id="KW-0217">Developmental protein</keyword>
<keyword id="KW-0418">Kinase</keyword>
<keyword id="KW-0547">Nucleotide-binding</keyword>
<keyword id="KW-0539">Nucleus</keyword>
<keyword id="KW-1267">Proteomics identification</keyword>
<keyword id="KW-1185">Reference proteome</keyword>
<keyword id="KW-0723">Serine/threonine-protein kinase</keyword>
<keyword id="KW-0808">Transferase</keyword>
<comment type="function">
    <text evidence="1 4">Required for high-level Shh responses in the developing neural tube. Together with TBC1D32, controls the structure of the primary cilium by coordinating assembly of the ciliary membrane and axoneme, allowing GLI2 to be properly activated in response to SHH signaling (By similarity). Involved in cell growth. Activates CDK2, a kinase involved in the control of the cell cycle, by phosphorylating residue 'Thr-160'.</text>
</comment>
<comment type="catalytic activity">
    <reaction>
        <text>L-seryl-[protein] + ATP = O-phospho-L-seryl-[protein] + ADP + H(+)</text>
        <dbReference type="Rhea" id="RHEA:17989"/>
        <dbReference type="Rhea" id="RHEA-COMP:9863"/>
        <dbReference type="Rhea" id="RHEA-COMP:11604"/>
        <dbReference type="ChEBI" id="CHEBI:15378"/>
        <dbReference type="ChEBI" id="CHEBI:29999"/>
        <dbReference type="ChEBI" id="CHEBI:30616"/>
        <dbReference type="ChEBI" id="CHEBI:83421"/>
        <dbReference type="ChEBI" id="CHEBI:456216"/>
        <dbReference type="EC" id="2.7.11.22"/>
    </reaction>
</comment>
<comment type="catalytic activity">
    <reaction>
        <text>L-threonyl-[protein] + ATP = O-phospho-L-threonyl-[protein] + ADP + H(+)</text>
        <dbReference type="Rhea" id="RHEA:46608"/>
        <dbReference type="Rhea" id="RHEA-COMP:11060"/>
        <dbReference type="Rhea" id="RHEA-COMP:11605"/>
        <dbReference type="ChEBI" id="CHEBI:15378"/>
        <dbReference type="ChEBI" id="CHEBI:30013"/>
        <dbReference type="ChEBI" id="CHEBI:30616"/>
        <dbReference type="ChEBI" id="CHEBI:61977"/>
        <dbReference type="ChEBI" id="CHEBI:456216"/>
        <dbReference type="EC" id="2.7.11.22"/>
    </reaction>
</comment>
<comment type="subunit">
    <text evidence="1 4 6">Monomer. Interacts with TBC1D32 (By similarity). Interacts with MAK.</text>
</comment>
<comment type="interaction">
    <interactant intactId="EBI-6128565">
        <id>Q8IZL9</id>
    </interactant>
    <interactant intactId="EBI-749840">
        <id>Q9C040</id>
        <label>TRIM2</label>
    </interactant>
    <organismsDiffer>false</organismsDiffer>
    <experiments>3</experiments>
</comment>
<comment type="subcellular location">
    <subcellularLocation>
        <location evidence="4">Nucleus</location>
    </subcellularLocation>
    <subcellularLocation>
        <location evidence="1">Cytoplasm</location>
    </subcellularLocation>
    <subcellularLocation>
        <location evidence="1">Cell projection</location>
        <location evidence="1">Cilium</location>
    </subcellularLocation>
</comment>
<comment type="alternative products">
    <event type="alternative splicing"/>
    <isoform>
        <id>Q8IZL9-1</id>
        <name>1</name>
        <sequence type="displayed"/>
    </isoform>
    <isoform>
        <id>Q8IZL9-2</id>
        <name>2</name>
        <name>Cardiac CCRK</name>
        <sequence type="described" ref="VSP_016748 VSP_016750"/>
    </isoform>
    <isoform>
        <id>Q8IZL9-3</id>
        <name>3</name>
        <sequence type="described" ref="VSP_016749 VSP_016751 VSP_016752"/>
    </isoform>
    <isoform>
        <id>Q8IZL9-4</id>
        <name>4</name>
        <sequence type="described" ref="VSP_043294 VSP_016749"/>
    </isoform>
    <isoform>
        <id>Q8IZL9-5</id>
        <name>5</name>
        <sequence type="described" ref="VSP_016749"/>
    </isoform>
</comment>
<comment type="similarity">
    <text evidence="13">Belongs to the protein kinase superfamily. CMGC Ser/Thr protein kinase family. CDC2/CDKX subfamily.</text>
</comment>
<comment type="sequence caution" evidence="13">
    <conflict type="frameshift">
        <sequence resource="EMBL-CDS" id="AAC98920"/>
    </conflict>
</comment>
<comment type="online information" name="Atlas of Genetics and Cytogenetics in Oncology and Haematology">
    <link uri="https://atlasgeneticsoncology.org/gene/43196/CCRK"/>
</comment>
<dbReference type="EC" id="2.7.11.22"/>
<dbReference type="EMBL" id="AF035013">
    <property type="protein sequence ID" value="AAC98920.1"/>
    <property type="status" value="ALT_FRAME"/>
    <property type="molecule type" value="mRNA"/>
</dbReference>
<dbReference type="EMBL" id="AF113130">
    <property type="protein sequence ID" value="AAF43778.1"/>
    <property type="molecule type" value="mRNA"/>
</dbReference>
<dbReference type="EMBL" id="AY904367">
    <property type="protein sequence ID" value="AAW82349.1"/>
    <property type="molecule type" value="mRNA"/>
</dbReference>
<dbReference type="EMBL" id="AF547664">
    <property type="protein sequence ID" value="AAN28684.1"/>
    <property type="molecule type" value="Genomic_DNA"/>
</dbReference>
<dbReference type="EMBL" id="AK075325">
    <property type="protein sequence ID" value="BAG52110.1"/>
    <property type="molecule type" value="mRNA"/>
</dbReference>
<dbReference type="EMBL" id="AK298993">
    <property type="protein sequence ID" value="BAG61083.1"/>
    <property type="molecule type" value="mRNA"/>
</dbReference>
<dbReference type="EMBL" id="AL353572">
    <property type="status" value="NOT_ANNOTATED_CDS"/>
    <property type="molecule type" value="Genomic_DNA"/>
</dbReference>
<dbReference type="EMBL" id="CH471089">
    <property type="protein sequence ID" value="EAW62746.1"/>
    <property type="molecule type" value="Genomic_DNA"/>
</dbReference>
<dbReference type="EMBL" id="CH471089">
    <property type="protein sequence ID" value="EAW62748.1"/>
    <property type="molecule type" value="Genomic_DNA"/>
</dbReference>
<dbReference type="EMBL" id="BC002655">
    <property type="protein sequence ID" value="AAH02655.1"/>
    <property type="molecule type" value="mRNA"/>
</dbReference>
<dbReference type="CCDS" id="CCDS35060.1">
    <molecule id="Q8IZL9-1"/>
</dbReference>
<dbReference type="CCDS" id="CCDS55324.1">
    <molecule id="Q8IZL9-2"/>
</dbReference>
<dbReference type="CCDS" id="CCDS65075.1">
    <molecule id="Q8IZL9-3"/>
</dbReference>
<dbReference type="CCDS" id="CCDS6677.1">
    <molecule id="Q8IZL9-5"/>
</dbReference>
<dbReference type="CCDS" id="CCDS6678.1">
    <molecule id="Q8IZL9-4"/>
</dbReference>
<dbReference type="RefSeq" id="NP_001034892.1">
    <molecule id="Q8IZL9-1"/>
    <property type="nucleotide sequence ID" value="NM_001039803.3"/>
</dbReference>
<dbReference type="RefSeq" id="NP_001164110.1">
    <molecule id="Q8IZL9-3"/>
    <property type="nucleotide sequence ID" value="NM_001170639.2"/>
</dbReference>
<dbReference type="RefSeq" id="NP_001164111.1">
    <molecule id="Q8IZL9-2"/>
    <property type="nucleotide sequence ID" value="NM_001170640.2"/>
</dbReference>
<dbReference type="RefSeq" id="NP_036251.2">
    <molecule id="Q8IZL9-5"/>
    <property type="nucleotide sequence ID" value="NM_012119.4"/>
</dbReference>
<dbReference type="RefSeq" id="NP_848519.1">
    <molecule id="Q8IZL9-4"/>
    <property type="nucleotide sequence ID" value="NM_178432.4"/>
</dbReference>
<dbReference type="SMR" id="Q8IZL9"/>
<dbReference type="BioGRID" id="117096">
    <property type="interactions" value="133"/>
</dbReference>
<dbReference type="FunCoup" id="Q8IZL9">
    <property type="interactions" value="1965"/>
</dbReference>
<dbReference type="IntAct" id="Q8IZL9">
    <property type="interactions" value="90"/>
</dbReference>
<dbReference type="STRING" id="9606.ENSP00000322343"/>
<dbReference type="BindingDB" id="Q8IZL9"/>
<dbReference type="ChEMBL" id="CHEMBL3559690"/>
<dbReference type="GlyGen" id="Q8IZL9">
    <property type="glycosylation" value="1 site, 1 O-linked glycan (1 site)"/>
</dbReference>
<dbReference type="iPTMnet" id="Q8IZL9"/>
<dbReference type="PhosphoSitePlus" id="Q8IZL9"/>
<dbReference type="BioMuta" id="CDK20"/>
<dbReference type="DMDM" id="74759739"/>
<dbReference type="jPOST" id="Q8IZL9"/>
<dbReference type="MassIVE" id="Q8IZL9"/>
<dbReference type="PaxDb" id="9606-ENSP00000322343"/>
<dbReference type="PeptideAtlas" id="Q8IZL9"/>
<dbReference type="ProteomicsDB" id="71369">
    <molecule id="Q8IZL9-1"/>
</dbReference>
<dbReference type="ProteomicsDB" id="71370">
    <molecule id="Q8IZL9-2"/>
</dbReference>
<dbReference type="ProteomicsDB" id="71371">
    <molecule id="Q8IZL9-3"/>
</dbReference>
<dbReference type="ProteomicsDB" id="71372">
    <molecule id="Q8IZL9-4"/>
</dbReference>
<dbReference type="Antibodypedia" id="27918">
    <property type="antibodies" value="350 antibodies from 30 providers"/>
</dbReference>
<dbReference type="DNASU" id="23552"/>
<dbReference type="Ensembl" id="ENST00000325303.9">
    <molecule id="Q8IZL9-1"/>
    <property type="protein sequence ID" value="ENSP00000322343.8"/>
    <property type="gene ID" value="ENSG00000156345.18"/>
</dbReference>
<dbReference type="Ensembl" id="ENST00000336654.9">
    <molecule id="Q8IZL9-4"/>
    <property type="protein sequence ID" value="ENSP00000338975.5"/>
    <property type="gene ID" value="ENSG00000156345.18"/>
</dbReference>
<dbReference type="Ensembl" id="ENST00000375871.8">
    <molecule id="Q8IZL9-2"/>
    <property type="protein sequence ID" value="ENSP00000365031.3"/>
    <property type="gene ID" value="ENSG00000156345.18"/>
</dbReference>
<dbReference type="Ensembl" id="ENST00000375883.7">
    <molecule id="Q8IZL9-5"/>
    <property type="protein sequence ID" value="ENSP00000365043.3"/>
    <property type="gene ID" value="ENSG00000156345.18"/>
</dbReference>
<dbReference type="Ensembl" id="ENST00000605159.5">
    <molecule id="Q8IZL9-3"/>
    <property type="protein sequence ID" value="ENSP00000474485.1"/>
    <property type="gene ID" value="ENSG00000156345.18"/>
</dbReference>
<dbReference type="GeneID" id="23552"/>
<dbReference type="KEGG" id="hsa:23552"/>
<dbReference type="MANE-Select" id="ENST00000325303.9">
    <property type="protein sequence ID" value="ENSP00000322343.8"/>
    <property type="RefSeq nucleotide sequence ID" value="NM_001039803.3"/>
    <property type="RefSeq protein sequence ID" value="NP_001034892.1"/>
</dbReference>
<dbReference type="UCSC" id="uc004apr.4">
    <molecule id="Q8IZL9-1"/>
    <property type="organism name" value="human"/>
</dbReference>
<dbReference type="AGR" id="HGNC:21420"/>
<dbReference type="CTD" id="23552"/>
<dbReference type="DisGeNET" id="23552"/>
<dbReference type="GeneCards" id="CDK20"/>
<dbReference type="HGNC" id="HGNC:21420">
    <property type="gene designation" value="CDK20"/>
</dbReference>
<dbReference type="HPA" id="ENSG00000156345">
    <property type="expression patterns" value="Low tissue specificity"/>
</dbReference>
<dbReference type="MalaCards" id="CDK20"/>
<dbReference type="MIM" id="610076">
    <property type="type" value="gene"/>
</dbReference>
<dbReference type="neXtProt" id="NX_Q8IZL9"/>
<dbReference type="OpenTargets" id="ENSG00000156345"/>
<dbReference type="PharmGKB" id="PA165585688"/>
<dbReference type="VEuPathDB" id="HostDB:ENSG00000156345"/>
<dbReference type="eggNOG" id="KOG0659">
    <property type="taxonomic scope" value="Eukaryota"/>
</dbReference>
<dbReference type="GeneTree" id="ENSGT00940000159128"/>
<dbReference type="HOGENOM" id="CLU_000288_181_6_1"/>
<dbReference type="InParanoid" id="Q8IZL9"/>
<dbReference type="OMA" id="KITFPYH"/>
<dbReference type="OrthoDB" id="63265at2759"/>
<dbReference type="PAN-GO" id="Q8IZL9">
    <property type="GO annotations" value="3 GO annotations based on evolutionary models"/>
</dbReference>
<dbReference type="PhylomeDB" id="Q8IZL9"/>
<dbReference type="TreeFam" id="TF327240"/>
<dbReference type="PathwayCommons" id="Q8IZL9"/>
<dbReference type="SignaLink" id="Q8IZL9"/>
<dbReference type="SIGNOR" id="Q8IZL9"/>
<dbReference type="BioGRID-ORCS" id="23552">
    <property type="hits" value="13 hits in 1181 CRISPR screens"/>
</dbReference>
<dbReference type="ChiTaRS" id="CDK20">
    <property type="organism name" value="human"/>
</dbReference>
<dbReference type="GenomeRNAi" id="23552"/>
<dbReference type="Pharos" id="Q8IZL9">
    <property type="development level" value="Tbio"/>
</dbReference>
<dbReference type="PRO" id="PR:Q8IZL9"/>
<dbReference type="Proteomes" id="UP000005640">
    <property type="component" value="Chromosome 9"/>
</dbReference>
<dbReference type="RNAct" id="Q8IZL9">
    <property type="molecule type" value="protein"/>
</dbReference>
<dbReference type="Bgee" id="ENSG00000156345">
    <property type="expression patterns" value="Expressed in right uterine tube and 123 other cell types or tissues"/>
</dbReference>
<dbReference type="ExpressionAtlas" id="Q8IZL9">
    <property type="expression patterns" value="baseline and differential"/>
</dbReference>
<dbReference type="GO" id="GO:0005929">
    <property type="term" value="C:cilium"/>
    <property type="evidence" value="ECO:0007669"/>
    <property type="project" value="UniProtKB-SubCell"/>
</dbReference>
<dbReference type="GO" id="GO:0005794">
    <property type="term" value="C:Golgi apparatus"/>
    <property type="evidence" value="ECO:0000314"/>
    <property type="project" value="HPA"/>
</dbReference>
<dbReference type="GO" id="GO:0005654">
    <property type="term" value="C:nucleoplasm"/>
    <property type="evidence" value="ECO:0000314"/>
    <property type="project" value="HPA"/>
</dbReference>
<dbReference type="GO" id="GO:0005634">
    <property type="term" value="C:nucleus"/>
    <property type="evidence" value="ECO:0000318"/>
    <property type="project" value="GO_Central"/>
</dbReference>
<dbReference type="GO" id="GO:0005524">
    <property type="term" value="F:ATP binding"/>
    <property type="evidence" value="ECO:0007669"/>
    <property type="project" value="UniProtKB-KW"/>
</dbReference>
<dbReference type="GO" id="GO:0004693">
    <property type="term" value="F:cyclin-dependent protein serine/threonine kinase activity"/>
    <property type="evidence" value="ECO:0007669"/>
    <property type="project" value="UniProtKB-EC"/>
</dbReference>
<dbReference type="GO" id="GO:0106310">
    <property type="term" value="F:protein serine kinase activity"/>
    <property type="evidence" value="ECO:0007669"/>
    <property type="project" value="RHEA"/>
</dbReference>
<dbReference type="GO" id="GO:0004674">
    <property type="term" value="F:protein serine/threonine kinase activity"/>
    <property type="evidence" value="ECO:0000318"/>
    <property type="project" value="GO_Central"/>
</dbReference>
<dbReference type="GO" id="GO:0051301">
    <property type="term" value="P:cell division"/>
    <property type="evidence" value="ECO:0007669"/>
    <property type="project" value="UniProtKB-KW"/>
</dbReference>
<dbReference type="GO" id="GO:1990403">
    <property type="term" value="P:embryonic brain development"/>
    <property type="evidence" value="ECO:0007669"/>
    <property type="project" value="Ensembl"/>
</dbReference>
<dbReference type="GO" id="GO:0031076">
    <property type="term" value="P:embryonic camera-type eye development"/>
    <property type="evidence" value="ECO:0007669"/>
    <property type="project" value="Ensembl"/>
</dbReference>
<dbReference type="GO" id="GO:0048706">
    <property type="term" value="P:embryonic skeletal system development"/>
    <property type="evidence" value="ECO:0007669"/>
    <property type="project" value="Ensembl"/>
</dbReference>
<dbReference type="GO" id="GO:0021508">
    <property type="term" value="P:floor plate formation"/>
    <property type="evidence" value="ECO:0007669"/>
    <property type="project" value="Ensembl"/>
</dbReference>
<dbReference type="GO" id="GO:0045879">
    <property type="term" value="P:negative regulation of smoothened signaling pathway"/>
    <property type="evidence" value="ECO:0007669"/>
    <property type="project" value="Ensembl"/>
</dbReference>
<dbReference type="GO" id="GO:0001843">
    <property type="term" value="P:neural tube closure"/>
    <property type="evidence" value="ECO:0007669"/>
    <property type="project" value="Ensembl"/>
</dbReference>
<dbReference type="GO" id="GO:0061512">
    <property type="term" value="P:protein localization to cilium"/>
    <property type="evidence" value="ECO:0007669"/>
    <property type="project" value="Ensembl"/>
</dbReference>
<dbReference type="GO" id="GO:1903317">
    <property type="term" value="P:regulation of protein maturation"/>
    <property type="evidence" value="ECO:0007669"/>
    <property type="project" value="Ensembl"/>
</dbReference>
<dbReference type="GO" id="GO:0060021">
    <property type="term" value="P:roof of mouth development"/>
    <property type="evidence" value="ECO:0007669"/>
    <property type="project" value="Ensembl"/>
</dbReference>
<dbReference type="CDD" id="cd07832">
    <property type="entry name" value="STKc_CCRK"/>
    <property type="match status" value="1"/>
</dbReference>
<dbReference type="FunFam" id="1.10.510.10:FF:000406">
    <property type="entry name" value="cyclin-dependent kinase 20 isoform X1"/>
    <property type="match status" value="1"/>
</dbReference>
<dbReference type="FunFam" id="3.30.200.20:FF:000211">
    <property type="entry name" value="Putative cyclin-dependent kinase 20"/>
    <property type="match status" value="1"/>
</dbReference>
<dbReference type="Gene3D" id="3.30.200.20">
    <property type="entry name" value="Phosphorylase Kinase, domain 1"/>
    <property type="match status" value="1"/>
</dbReference>
<dbReference type="Gene3D" id="1.10.510.10">
    <property type="entry name" value="Transferase(Phosphotransferase) domain 1"/>
    <property type="match status" value="1"/>
</dbReference>
<dbReference type="InterPro" id="IPR050108">
    <property type="entry name" value="CDK"/>
</dbReference>
<dbReference type="InterPro" id="IPR048002">
    <property type="entry name" value="CDK20-like_STKc"/>
</dbReference>
<dbReference type="InterPro" id="IPR011009">
    <property type="entry name" value="Kinase-like_dom_sf"/>
</dbReference>
<dbReference type="InterPro" id="IPR000719">
    <property type="entry name" value="Prot_kinase_dom"/>
</dbReference>
<dbReference type="InterPro" id="IPR017441">
    <property type="entry name" value="Protein_kinase_ATP_BS"/>
</dbReference>
<dbReference type="InterPro" id="IPR008271">
    <property type="entry name" value="Ser/Thr_kinase_AS"/>
</dbReference>
<dbReference type="PANTHER" id="PTHR24056">
    <property type="entry name" value="CELL DIVISION PROTEIN KINASE"/>
    <property type="match status" value="1"/>
</dbReference>
<dbReference type="PANTHER" id="PTHR24056:SF171">
    <property type="entry name" value="CYCLIN-DEPENDENT KINASE 20"/>
    <property type="match status" value="1"/>
</dbReference>
<dbReference type="Pfam" id="PF00069">
    <property type="entry name" value="Pkinase"/>
    <property type="match status" value="1"/>
</dbReference>
<dbReference type="SMART" id="SM00220">
    <property type="entry name" value="S_TKc"/>
    <property type="match status" value="1"/>
</dbReference>
<dbReference type="SUPFAM" id="SSF56112">
    <property type="entry name" value="Protein kinase-like (PK-like)"/>
    <property type="match status" value="1"/>
</dbReference>
<dbReference type="PROSITE" id="PS00107">
    <property type="entry name" value="PROTEIN_KINASE_ATP"/>
    <property type="match status" value="1"/>
</dbReference>
<dbReference type="PROSITE" id="PS50011">
    <property type="entry name" value="PROTEIN_KINASE_DOM"/>
    <property type="match status" value="1"/>
</dbReference>
<dbReference type="PROSITE" id="PS00108">
    <property type="entry name" value="PROTEIN_KINASE_ST"/>
    <property type="match status" value="1"/>
</dbReference>
<gene>
    <name type="primary">CDK20</name>
    <name type="synonym">CCRK</name>
    <name type="synonym">CDCH</name>
</gene>
<accession>Q8IZL9</accession>
<accession>A2A389</accession>
<accession>A2A390</accession>
<accession>B4DQX1</accession>
<accession>O95137</accession>
<accession>Q5EDC4</accession>
<accession>Q5VYW1</accession>
<accession>Q9BUF4</accession>
<feature type="chain" id="PRO_0000085701" description="Cyclin-dependent kinase 20">
    <location>
        <begin position="1"/>
        <end position="346"/>
    </location>
</feature>
<feature type="domain" description="Protein kinase" evidence="2">
    <location>
        <begin position="4"/>
        <end position="288"/>
    </location>
</feature>
<feature type="active site" description="Proton acceptor" evidence="2 3">
    <location>
        <position position="127"/>
    </location>
</feature>
<feature type="binding site" evidence="2">
    <location>
        <begin position="10"/>
        <end position="18"/>
    </location>
    <ligand>
        <name>ATP</name>
        <dbReference type="ChEBI" id="CHEBI:30616"/>
    </ligand>
</feature>
<feature type="binding site" evidence="2">
    <location>
        <position position="33"/>
    </location>
    <ligand>
        <name>ATP</name>
        <dbReference type="ChEBI" id="CHEBI:30616"/>
    </ligand>
</feature>
<feature type="splice variant" id="VSP_043294" description="In isoform 4." evidence="8">
    <original>E</original>
    <variation>EPRVGWQCLPSILQ</variation>
    <location>
        <position position="25"/>
    </location>
</feature>
<feature type="splice variant" id="VSP_016748" description="In isoform 2." evidence="8 12">
    <original>WYRAPELLYGARQYDQGVDLWSVGCIMGELLNGSPLFPGKNDIEQLCYVLRILGTPNPQVWPELTELPDYNKISFK</original>
    <variation>SSLSCRTTTRSPLRSRCPCPWRRCCLTSLPRHWICWVNSFSTLLTSASQLPRLSSISTSSQLPCLPIHLSCRFLSV</variation>
    <location>
        <begin position="168"/>
        <end position="243"/>
    </location>
</feature>
<feature type="splice variant" id="VSP_016749" description="In isoform 3, isoform 4 and isoform 5." evidence="8 9 10 11">
    <location>
        <begin position="168"/>
        <end position="188"/>
    </location>
</feature>
<feature type="splice variant" id="VSP_016750" description="In isoform 2." evidence="8 12">
    <location>
        <begin position="244"/>
        <end position="346"/>
    </location>
</feature>
<feature type="splice variant" id="VSP_016751" description="In isoform 3." evidence="9">
    <original>ALLHQYFFTAPLPAH</original>
    <variation>LPCLPIHLSCRFLSV</variation>
    <location>
        <begin position="282"/>
        <end position="296"/>
    </location>
</feature>
<feature type="splice variant" id="VSP_016752" description="In isoform 3." evidence="9">
    <location>
        <begin position="297"/>
        <end position="346"/>
    </location>
</feature>
<feature type="sequence variant" id="VAR_024762" description="In dbSNP:rs28364953." evidence="7">
    <original>S</original>
    <variation>L</variation>
    <location>
        <position position="86"/>
    </location>
</feature>
<feature type="sequence variant" id="VAR_041957" description="In dbSNP:rs41286029." evidence="5">
    <original>S</original>
    <variation>N</variation>
    <location>
        <position position="106"/>
    </location>
</feature>
<feature type="sequence variant" id="VAR_024763" description="In dbSNP:rs28364955." evidence="7">
    <original>A</original>
    <variation>T</variation>
    <location>
        <position position="137"/>
    </location>
</feature>
<feature type="sequence variant" id="VAR_024764" description="In dbSNP:rs28364963." evidence="7">
    <original>K</original>
    <variation>R</variation>
    <location>
        <position position="281"/>
    </location>
</feature>
<feature type="mutagenesis site" description="Impairs CDK2 T-160 phosphorylation and activity." evidence="4">
    <original>T</original>
    <variation>A</variation>
    <location>
        <position position="161"/>
    </location>
</feature>
<feature type="sequence conflict" description="In Ref. 1; AAC98920 and 2; AAF43778." evidence="13" ref="1 2">
    <original>V</original>
    <variation>I</variation>
    <location>
        <position position="30"/>
    </location>
</feature>
<organism>
    <name type="scientific">Homo sapiens</name>
    <name type="common">Human</name>
    <dbReference type="NCBI Taxonomy" id="9606"/>
    <lineage>
        <taxon>Eukaryota</taxon>
        <taxon>Metazoa</taxon>
        <taxon>Chordata</taxon>
        <taxon>Craniata</taxon>
        <taxon>Vertebrata</taxon>
        <taxon>Euteleostomi</taxon>
        <taxon>Mammalia</taxon>
        <taxon>Eutheria</taxon>
        <taxon>Euarchontoglires</taxon>
        <taxon>Primates</taxon>
        <taxon>Haplorrhini</taxon>
        <taxon>Catarrhini</taxon>
        <taxon>Hominidae</taxon>
        <taxon>Homo</taxon>
    </lineage>
</organism>
<protein>
    <recommendedName>
        <fullName>Cyclin-dependent kinase 20</fullName>
        <ecNumber>2.7.11.22</ecNumber>
    </recommendedName>
    <alternativeName>
        <fullName>CDK-activating kinase p42</fullName>
        <shortName>CAK-kinase p42</shortName>
    </alternativeName>
    <alternativeName>
        <fullName>Cell cycle-related kinase</fullName>
    </alternativeName>
    <alternativeName>
        <fullName>Cell division protein kinase 20</fullName>
    </alternativeName>
    <alternativeName>
        <fullName>Cyclin-dependent protein kinase H</fullName>
    </alternativeName>
    <alternativeName>
        <fullName>Cyclin-kinase-activating kinase p42</fullName>
    </alternativeName>
</protein>
<name>CDK20_HUMAN</name>
<reference key="1">
    <citation type="submission" date="1997-11" db="EMBL/GenBank/DDBJ databases">
        <authorList>
            <person name="Jiang Y."/>
            <person name="Zhao K."/>
        </authorList>
    </citation>
    <scope>NUCLEOTIDE SEQUENCE [MRNA] (ISOFORM 5)</scope>
</reference>
<reference key="2">
    <citation type="submission" date="1998-12" db="EMBL/GenBank/DDBJ databases">
        <title>Cloning a cyclin-dependent protein kinase CDCH.</title>
        <authorList>
            <person name="Chen J.H."/>
            <person name="Luo W.Q."/>
            <person name="Hu S.N."/>
            <person name="Huang X.W."/>
            <person name="Tan X.Y."/>
            <person name="Yuan J.G."/>
            <person name="Qiang B.Q."/>
        </authorList>
    </citation>
    <scope>NUCLEOTIDE SEQUENCE [MRNA] (ISOFORM 5)</scope>
</reference>
<reference key="3">
    <citation type="submission" date="2005-01" db="EMBL/GenBank/DDBJ databases">
        <title>Cardiac CCRK splice variant.</title>
        <authorList>
            <person name="Qiu H."/>
            <person name="Depre C."/>
        </authorList>
    </citation>
    <scope>NUCLEOTIDE SEQUENCE [MRNA] (ISOFORM 2)</scope>
    <source>
        <tissue>Heart</tissue>
    </source>
</reference>
<reference key="4">
    <citation type="submission" date="2002-09" db="EMBL/GenBank/DDBJ databases">
        <authorList>
            <consortium name="NIEHS SNPs program"/>
        </authorList>
    </citation>
    <scope>NUCLEOTIDE SEQUENCE [GENOMIC DNA]</scope>
    <scope>VARIANTS LEU-86; THR-137 AND ARG-281</scope>
</reference>
<reference key="5">
    <citation type="journal article" date="2004" name="Nat. Genet.">
        <title>Complete sequencing and characterization of 21,243 full-length human cDNAs.</title>
        <authorList>
            <person name="Ota T."/>
            <person name="Suzuki Y."/>
            <person name="Nishikawa T."/>
            <person name="Otsuki T."/>
            <person name="Sugiyama T."/>
            <person name="Irie R."/>
            <person name="Wakamatsu A."/>
            <person name="Hayashi K."/>
            <person name="Sato H."/>
            <person name="Nagai K."/>
            <person name="Kimura K."/>
            <person name="Makita H."/>
            <person name="Sekine M."/>
            <person name="Obayashi M."/>
            <person name="Nishi T."/>
            <person name="Shibahara T."/>
            <person name="Tanaka T."/>
            <person name="Ishii S."/>
            <person name="Yamamoto J."/>
            <person name="Saito K."/>
            <person name="Kawai Y."/>
            <person name="Isono Y."/>
            <person name="Nakamura Y."/>
            <person name="Nagahari K."/>
            <person name="Murakami K."/>
            <person name="Yasuda T."/>
            <person name="Iwayanagi T."/>
            <person name="Wagatsuma M."/>
            <person name="Shiratori A."/>
            <person name="Sudo H."/>
            <person name="Hosoiri T."/>
            <person name="Kaku Y."/>
            <person name="Kodaira H."/>
            <person name="Kondo H."/>
            <person name="Sugawara M."/>
            <person name="Takahashi M."/>
            <person name="Kanda K."/>
            <person name="Yokoi T."/>
            <person name="Furuya T."/>
            <person name="Kikkawa E."/>
            <person name="Omura Y."/>
            <person name="Abe K."/>
            <person name="Kamihara K."/>
            <person name="Katsuta N."/>
            <person name="Sato K."/>
            <person name="Tanikawa M."/>
            <person name="Yamazaki M."/>
            <person name="Ninomiya K."/>
            <person name="Ishibashi T."/>
            <person name="Yamashita H."/>
            <person name="Murakawa K."/>
            <person name="Fujimori K."/>
            <person name="Tanai H."/>
            <person name="Kimata M."/>
            <person name="Watanabe M."/>
            <person name="Hiraoka S."/>
            <person name="Chiba Y."/>
            <person name="Ishida S."/>
            <person name="Ono Y."/>
            <person name="Takiguchi S."/>
            <person name="Watanabe S."/>
            <person name="Yosida M."/>
            <person name="Hotuta T."/>
            <person name="Kusano J."/>
            <person name="Kanehori K."/>
            <person name="Takahashi-Fujii A."/>
            <person name="Hara H."/>
            <person name="Tanase T.-O."/>
            <person name="Nomura Y."/>
            <person name="Togiya S."/>
            <person name="Komai F."/>
            <person name="Hara R."/>
            <person name="Takeuchi K."/>
            <person name="Arita M."/>
            <person name="Imose N."/>
            <person name="Musashino K."/>
            <person name="Yuuki H."/>
            <person name="Oshima A."/>
            <person name="Sasaki N."/>
            <person name="Aotsuka S."/>
            <person name="Yoshikawa Y."/>
            <person name="Matsunawa H."/>
            <person name="Ichihara T."/>
            <person name="Shiohata N."/>
            <person name="Sano S."/>
            <person name="Moriya S."/>
            <person name="Momiyama H."/>
            <person name="Satoh N."/>
            <person name="Takami S."/>
            <person name="Terashima Y."/>
            <person name="Suzuki O."/>
            <person name="Nakagawa S."/>
            <person name="Senoh A."/>
            <person name="Mizoguchi H."/>
            <person name="Goto Y."/>
            <person name="Shimizu F."/>
            <person name="Wakebe H."/>
            <person name="Hishigaki H."/>
            <person name="Watanabe T."/>
            <person name="Sugiyama A."/>
            <person name="Takemoto M."/>
            <person name="Kawakami B."/>
            <person name="Yamazaki M."/>
            <person name="Watanabe K."/>
            <person name="Kumagai A."/>
            <person name="Itakura S."/>
            <person name="Fukuzumi Y."/>
            <person name="Fujimori Y."/>
            <person name="Komiyama M."/>
            <person name="Tashiro H."/>
            <person name="Tanigami A."/>
            <person name="Fujiwara T."/>
            <person name="Ono T."/>
            <person name="Yamada K."/>
            <person name="Fujii Y."/>
            <person name="Ozaki K."/>
            <person name="Hirao M."/>
            <person name="Ohmori Y."/>
            <person name="Kawabata A."/>
            <person name="Hikiji T."/>
            <person name="Kobatake N."/>
            <person name="Inagaki H."/>
            <person name="Ikema Y."/>
            <person name="Okamoto S."/>
            <person name="Okitani R."/>
            <person name="Kawakami T."/>
            <person name="Noguchi S."/>
            <person name="Itoh T."/>
            <person name="Shigeta K."/>
            <person name="Senba T."/>
            <person name="Matsumura K."/>
            <person name="Nakajima Y."/>
            <person name="Mizuno T."/>
            <person name="Morinaga M."/>
            <person name="Sasaki M."/>
            <person name="Togashi T."/>
            <person name="Oyama M."/>
            <person name="Hata H."/>
            <person name="Watanabe M."/>
            <person name="Komatsu T."/>
            <person name="Mizushima-Sugano J."/>
            <person name="Satoh T."/>
            <person name="Shirai Y."/>
            <person name="Takahashi Y."/>
            <person name="Nakagawa K."/>
            <person name="Okumura K."/>
            <person name="Nagase T."/>
            <person name="Nomura N."/>
            <person name="Kikuchi H."/>
            <person name="Masuho Y."/>
            <person name="Yamashita R."/>
            <person name="Nakai K."/>
            <person name="Yada T."/>
            <person name="Nakamura Y."/>
            <person name="Ohara O."/>
            <person name="Isogai T."/>
            <person name="Sugano S."/>
        </authorList>
    </citation>
    <scope>NUCLEOTIDE SEQUENCE [LARGE SCALE MRNA] (ISOFORMS 2 AND 4)</scope>
</reference>
<reference key="6">
    <citation type="journal article" date="2004" name="Nature">
        <title>DNA sequence and analysis of human chromosome 9.</title>
        <authorList>
            <person name="Humphray S.J."/>
            <person name="Oliver K."/>
            <person name="Hunt A.R."/>
            <person name="Plumb R.W."/>
            <person name="Loveland J.E."/>
            <person name="Howe K.L."/>
            <person name="Andrews T.D."/>
            <person name="Searle S."/>
            <person name="Hunt S.E."/>
            <person name="Scott C.E."/>
            <person name="Jones M.C."/>
            <person name="Ainscough R."/>
            <person name="Almeida J.P."/>
            <person name="Ambrose K.D."/>
            <person name="Ashwell R.I.S."/>
            <person name="Babbage A.K."/>
            <person name="Babbage S."/>
            <person name="Bagguley C.L."/>
            <person name="Bailey J."/>
            <person name="Banerjee R."/>
            <person name="Barker D.J."/>
            <person name="Barlow K.F."/>
            <person name="Bates K."/>
            <person name="Beasley H."/>
            <person name="Beasley O."/>
            <person name="Bird C.P."/>
            <person name="Bray-Allen S."/>
            <person name="Brown A.J."/>
            <person name="Brown J.Y."/>
            <person name="Burford D."/>
            <person name="Burrill W."/>
            <person name="Burton J."/>
            <person name="Carder C."/>
            <person name="Carter N.P."/>
            <person name="Chapman J.C."/>
            <person name="Chen Y."/>
            <person name="Clarke G."/>
            <person name="Clark S.Y."/>
            <person name="Clee C.M."/>
            <person name="Clegg S."/>
            <person name="Collier R.E."/>
            <person name="Corby N."/>
            <person name="Crosier M."/>
            <person name="Cummings A.T."/>
            <person name="Davies J."/>
            <person name="Dhami P."/>
            <person name="Dunn M."/>
            <person name="Dutta I."/>
            <person name="Dyer L.W."/>
            <person name="Earthrowl M.E."/>
            <person name="Faulkner L."/>
            <person name="Fleming C.J."/>
            <person name="Frankish A."/>
            <person name="Frankland J.A."/>
            <person name="French L."/>
            <person name="Fricker D.G."/>
            <person name="Garner P."/>
            <person name="Garnett J."/>
            <person name="Ghori J."/>
            <person name="Gilbert J.G.R."/>
            <person name="Glison C."/>
            <person name="Grafham D.V."/>
            <person name="Gribble S."/>
            <person name="Griffiths C."/>
            <person name="Griffiths-Jones S."/>
            <person name="Grocock R."/>
            <person name="Guy J."/>
            <person name="Hall R.E."/>
            <person name="Hammond S."/>
            <person name="Harley J.L."/>
            <person name="Harrison E.S.I."/>
            <person name="Hart E.A."/>
            <person name="Heath P.D."/>
            <person name="Henderson C.D."/>
            <person name="Hopkins B.L."/>
            <person name="Howard P.J."/>
            <person name="Howden P.J."/>
            <person name="Huckle E."/>
            <person name="Johnson C."/>
            <person name="Johnson D."/>
            <person name="Joy A.A."/>
            <person name="Kay M."/>
            <person name="Keenan S."/>
            <person name="Kershaw J.K."/>
            <person name="Kimberley A.M."/>
            <person name="King A."/>
            <person name="Knights A."/>
            <person name="Laird G.K."/>
            <person name="Langford C."/>
            <person name="Lawlor S."/>
            <person name="Leongamornlert D.A."/>
            <person name="Leversha M."/>
            <person name="Lloyd C."/>
            <person name="Lloyd D.M."/>
            <person name="Lovell J."/>
            <person name="Martin S."/>
            <person name="Mashreghi-Mohammadi M."/>
            <person name="Matthews L."/>
            <person name="McLaren S."/>
            <person name="McLay K.E."/>
            <person name="McMurray A."/>
            <person name="Milne S."/>
            <person name="Nickerson T."/>
            <person name="Nisbett J."/>
            <person name="Nordsiek G."/>
            <person name="Pearce A.V."/>
            <person name="Peck A.I."/>
            <person name="Porter K.M."/>
            <person name="Pandian R."/>
            <person name="Pelan S."/>
            <person name="Phillimore B."/>
            <person name="Povey S."/>
            <person name="Ramsey Y."/>
            <person name="Rand V."/>
            <person name="Scharfe M."/>
            <person name="Sehra H.K."/>
            <person name="Shownkeen R."/>
            <person name="Sims S.K."/>
            <person name="Skuce C.D."/>
            <person name="Smith M."/>
            <person name="Steward C.A."/>
            <person name="Swarbreck D."/>
            <person name="Sycamore N."/>
            <person name="Tester J."/>
            <person name="Thorpe A."/>
            <person name="Tracey A."/>
            <person name="Tromans A."/>
            <person name="Thomas D.W."/>
            <person name="Wall M."/>
            <person name="Wallis J.M."/>
            <person name="West A.P."/>
            <person name="Whitehead S.L."/>
            <person name="Willey D.L."/>
            <person name="Williams S.A."/>
            <person name="Wilming L."/>
            <person name="Wray P.W."/>
            <person name="Young L."/>
            <person name="Ashurst J.L."/>
            <person name="Coulson A."/>
            <person name="Blocker H."/>
            <person name="Durbin R.M."/>
            <person name="Sulston J.E."/>
            <person name="Hubbard T."/>
            <person name="Jackson M.J."/>
            <person name="Bentley D.R."/>
            <person name="Beck S."/>
            <person name="Rogers J."/>
            <person name="Dunham I."/>
        </authorList>
    </citation>
    <scope>NUCLEOTIDE SEQUENCE [LARGE SCALE GENOMIC DNA]</scope>
</reference>
<reference key="7">
    <citation type="submission" date="2005-07" db="EMBL/GenBank/DDBJ databases">
        <authorList>
            <person name="Mural R.J."/>
            <person name="Istrail S."/>
            <person name="Sutton G.G."/>
            <person name="Florea L."/>
            <person name="Halpern A.L."/>
            <person name="Mobarry C.M."/>
            <person name="Lippert R."/>
            <person name="Walenz B."/>
            <person name="Shatkay H."/>
            <person name="Dew I."/>
            <person name="Miller J.R."/>
            <person name="Flanigan M.J."/>
            <person name="Edwards N.J."/>
            <person name="Bolanos R."/>
            <person name="Fasulo D."/>
            <person name="Halldorsson B.V."/>
            <person name="Hannenhalli S."/>
            <person name="Turner R."/>
            <person name="Yooseph S."/>
            <person name="Lu F."/>
            <person name="Nusskern D.R."/>
            <person name="Shue B.C."/>
            <person name="Zheng X.H."/>
            <person name="Zhong F."/>
            <person name="Delcher A.L."/>
            <person name="Huson D.H."/>
            <person name="Kravitz S.A."/>
            <person name="Mouchard L."/>
            <person name="Reinert K."/>
            <person name="Remington K.A."/>
            <person name="Clark A.G."/>
            <person name="Waterman M.S."/>
            <person name="Eichler E.E."/>
            <person name="Adams M.D."/>
            <person name="Hunkapiller M.W."/>
            <person name="Myers E.W."/>
            <person name="Venter J.C."/>
        </authorList>
    </citation>
    <scope>NUCLEOTIDE SEQUENCE [LARGE SCALE GENOMIC DNA]</scope>
</reference>
<reference key="8">
    <citation type="journal article" date="2004" name="Genome Res.">
        <title>The status, quality, and expansion of the NIH full-length cDNA project: the Mammalian Gene Collection (MGC).</title>
        <authorList>
            <consortium name="The MGC Project Team"/>
        </authorList>
    </citation>
    <scope>NUCLEOTIDE SEQUENCE [LARGE SCALE MRNA] (ISOFORM 3)</scope>
    <source>
        <tissue>Uterus</tissue>
    </source>
</reference>
<reference key="9">
    <citation type="journal article" date="2004" name="J. Biol. Chem.">
        <title>p42, a novel cyclin-dependent kinase-activating kinase in mammalian cells.</title>
        <authorList>
            <person name="Liu Y."/>
            <person name="Wu C."/>
            <person name="Galaktionov K."/>
        </authorList>
    </citation>
    <scope>FUNCTION</scope>
    <scope>SUBUNIT</scope>
    <scope>SUBCELLULAR LOCATION</scope>
    <scope>MUTAGENESIS OF THR-161</scope>
</reference>
<reference key="10">
    <citation type="journal article" date="2012" name="Oncogene">
        <title>Male germ cell-associated kinase is overexpressed in prostate cancer cells and causes mitotic defects via deregulation of APC/C(CDH1).</title>
        <authorList>
            <person name="Wang L.Y."/>
            <person name="Kung H.J."/>
        </authorList>
    </citation>
    <scope>INTERACTION WITH MAK</scope>
</reference>
<reference key="11">
    <citation type="journal article" date="2007" name="Nature">
        <title>Patterns of somatic mutation in human cancer genomes.</title>
        <authorList>
            <person name="Greenman C."/>
            <person name="Stephens P."/>
            <person name="Smith R."/>
            <person name="Dalgliesh G.L."/>
            <person name="Hunter C."/>
            <person name="Bignell G."/>
            <person name="Davies H."/>
            <person name="Teague J."/>
            <person name="Butler A."/>
            <person name="Stevens C."/>
            <person name="Edkins S."/>
            <person name="O'Meara S."/>
            <person name="Vastrik I."/>
            <person name="Schmidt E.E."/>
            <person name="Avis T."/>
            <person name="Barthorpe S."/>
            <person name="Bhamra G."/>
            <person name="Buck G."/>
            <person name="Choudhury B."/>
            <person name="Clements J."/>
            <person name="Cole J."/>
            <person name="Dicks E."/>
            <person name="Forbes S."/>
            <person name="Gray K."/>
            <person name="Halliday K."/>
            <person name="Harrison R."/>
            <person name="Hills K."/>
            <person name="Hinton J."/>
            <person name="Jenkinson A."/>
            <person name="Jones D."/>
            <person name="Menzies A."/>
            <person name="Mironenko T."/>
            <person name="Perry J."/>
            <person name="Raine K."/>
            <person name="Richardson D."/>
            <person name="Shepherd R."/>
            <person name="Small A."/>
            <person name="Tofts C."/>
            <person name="Varian J."/>
            <person name="Webb T."/>
            <person name="West S."/>
            <person name="Widaa S."/>
            <person name="Yates A."/>
            <person name="Cahill D.P."/>
            <person name="Louis D.N."/>
            <person name="Goldstraw P."/>
            <person name="Nicholson A.G."/>
            <person name="Brasseur F."/>
            <person name="Looijenga L."/>
            <person name="Weber B.L."/>
            <person name="Chiew Y.-E."/>
            <person name="DeFazio A."/>
            <person name="Greaves M.F."/>
            <person name="Green A.R."/>
            <person name="Campbell P."/>
            <person name="Birney E."/>
            <person name="Easton D.F."/>
            <person name="Chenevix-Trench G."/>
            <person name="Tan M.-H."/>
            <person name="Khoo S.K."/>
            <person name="Teh B.T."/>
            <person name="Yuen S.T."/>
            <person name="Leung S.Y."/>
            <person name="Wooster R."/>
            <person name="Futreal P.A."/>
            <person name="Stratton M.R."/>
        </authorList>
    </citation>
    <scope>VARIANT [LARGE SCALE ANALYSIS] ASN-106</scope>
</reference>